<dbReference type="EMBL" id="CP000086">
    <property type="protein sequence ID" value="ABC39289.1"/>
    <property type="molecule type" value="Genomic_DNA"/>
</dbReference>
<dbReference type="RefSeq" id="WP_009892611.1">
    <property type="nucleotide sequence ID" value="NZ_CP008785.1"/>
</dbReference>
<dbReference type="SMR" id="Q2T0I1"/>
<dbReference type="GeneID" id="60547023"/>
<dbReference type="KEGG" id="bte:BTH_I0762"/>
<dbReference type="HOGENOM" id="CLU_134358_0_0_4"/>
<dbReference type="Proteomes" id="UP000001930">
    <property type="component" value="Chromosome I"/>
</dbReference>
<dbReference type="GO" id="GO:0030163">
    <property type="term" value="P:protein catabolic process"/>
    <property type="evidence" value="ECO:0007669"/>
    <property type="project" value="InterPro"/>
</dbReference>
<dbReference type="GO" id="GO:0006508">
    <property type="term" value="P:proteolysis"/>
    <property type="evidence" value="ECO:0007669"/>
    <property type="project" value="UniProtKB-UniRule"/>
</dbReference>
<dbReference type="FunFam" id="3.30.1390.10:FF:000002">
    <property type="entry name" value="ATP-dependent Clp protease adapter protein ClpS"/>
    <property type="match status" value="1"/>
</dbReference>
<dbReference type="Gene3D" id="3.30.1390.10">
    <property type="match status" value="1"/>
</dbReference>
<dbReference type="HAMAP" id="MF_00302">
    <property type="entry name" value="ClpS"/>
    <property type="match status" value="1"/>
</dbReference>
<dbReference type="InterPro" id="IPR022935">
    <property type="entry name" value="ClpS"/>
</dbReference>
<dbReference type="InterPro" id="IPR003769">
    <property type="entry name" value="ClpS_core"/>
</dbReference>
<dbReference type="InterPro" id="IPR014719">
    <property type="entry name" value="Ribosomal_bL12_C/ClpS-like"/>
</dbReference>
<dbReference type="NCBIfam" id="NF000672">
    <property type="entry name" value="PRK00033.1-5"/>
    <property type="match status" value="1"/>
</dbReference>
<dbReference type="PANTHER" id="PTHR33473:SF19">
    <property type="entry name" value="ATP-DEPENDENT CLP PROTEASE ADAPTER PROTEIN CLPS"/>
    <property type="match status" value="1"/>
</dbReference>
<dbReference type="PANTHER" id="PTHR33473">
    <property type="entry name" value="ATP-DEPENDENT CLP PROTEASE ADAPTER PROTEIN CLPS1, CHLOROPLASTIC"/>
    <property type="match status" value="1"/>
</dbReference>
<dbReference type="Pfam" id="PF02617">
    <property type="entry name" value="ClpS"/>
    <property type="match status" value="1"/>
</dbReference>
<dbReference type="SUPFAM" id="SSF54736">
    <property type="entry name" value="ClpS-like"/>
    <property type="match status" value="1"/>
</dbReference>
<evidence type="ECO:0000255" key="1">
    <source>
        <dbReference type="HAMAP-Rule" id="MF_00302"/>
    </source>
</evidence>
<proteinExistence type="inferred from homology"/>
<protein>
    <recommendedName>
        <fullName evidence="1">ATP-dependent Clp protease adapter protein ClpS</fullName>
    </recommendedName>
</protein>
<name>CLPS_BURTA</name>
<organism>
    <name type="scientific">Burkholderia thailandensis (strain ATCC 700388 / DSM 13276 / CCUG 48851 / CIP 106301 / E264)</name>
    <dbReference type="NCBI Taxonomy" id="271848"/>
    <lineage>
        <taxon>Bacteria</taxon>
        <taxon>Pseudomonadati</taxon>
        <taxon>Pseudomonadota</taxon>
        <taxon>Betaproteobacteria</taxon>
        <taxon>Burkholderiales</taxon>
        <taxon>Burkholderiaceae</taxon>
        <taxon>Burkholderia</taxon>
        <taxon>pseudomallei group</taxon>
    </lineage>
</organism>
<gene>
    <name evidence="1" type="primary">clpS</name>
    <name type="ordered locus">BTH_I0762</name>
</gene>
<accession>Q2T0I1</accession>
<comment type="function">
    <text evidence="1">Involved in the modulation of the specificity of the ClpAP-mediated ATP-dependent protein degradation.</text>
</comment>
<comment type="subunit">
    <text evidence="1">Binds to the N-terminal domain of the chaperone ClpA.</text>
</comment>
<comment type="similarity">
    <text evidence="1">Belongs to the ClpS family.</text>
</comment>
<sequence length="104" mass="11951">MAIIPDKQDSTVLERKEQKLKPPSMYKVVLLNDDFTPMEFVVMIVQEYFKKDRETATQIMLKVHREGRGVCGVYTRDIASTKVEQVVTHARQAGHPLQCVMEEA</sequence>
<reference key="1">
    <citation type="journal article" date="2005" name="BMC Genomics">
        <title>Bacterial genome adaptation to niches: divergence of the potential virulence genes in three Burkholderia species of different survival strategies.</title>
        <authorList>
            <person name="Kim H.S."/>
            <person name="Schell M.A."/>
            <person name="Yu Y."/>
            <person name="Ulrich R.L."/>
            <person name="Sarria S.H."/>
            <person name="Nierman W.C."/>
            <person name="DeShazer D."/>
        </authorList>
    </citation>
    <scope>NUCLEOTIDE SEQUENCE [LARGE SCALE GENOMIC DNA]</scope>
    <source>
        <strain>ATCC 700388 / DSM 13276 / CCUG 48851 / CIP 106301 / E264</strain>
    </source>
</reference>
<feature type="chain" id="PRO_1000022600" description="ATP-dependent Clp protease adapter protein ClpS">
    <location>
        <begin position="1"/>
        <end position="104"/>
    </location>
</feature>